<keyword id="KW-1185">Reference proteome</keyword>
<keyword id="KW-0687">Ribonucleoprotein</keyword>
<keyword id="KW-0689">Ribosomal protein</keyword>
<keyword id="KW-0694">RNA-binding</keyword>
<keyword id="KW-0699">rRNA-binding</keyword>
<name>RS3_RHOBA</name>
<sequence>MGQKVNPIAFRTGVTRGWGSRWYASKQDFADLLVEDRKIREFITKHPKKSQYKSAGIDRIEIERTRDEVRVMLYVARPGLIIGKKGQEIEILQAELQNLVGRRINLKVEEVGRPELQAQLVAEDISQQLAKRSSFRRTMKRMLEQTMDAGAKGIKIQMAGRLGGAEMARREKQSAGSIPLSTLQAKIDYGFTEAMTPQGHIGIQVWINQGTYGDDNDGADAQTGQASKKPKRSYKR</sequence>
<dbReference type="EMBL" id="BX294146">
    <property type="protein sequence ID" value="CAD75605.1"/>
    <property type="molecule type" value="Genomic_DNA"/>
</dbReference>
<dbReference type="RefSeq" id="NP_868058.1">
    <property type="nucleotide sequence ID" value="NC_005027.1"/>
</dbReference>
<dbReference type="RefSeq" id="WP_007326802.1">
    <property type="nucleotide sequence ID" value="NC_005027.1"/>
</dbReference>
<dbReference type="SMR" id="Q7UN14"/>
<dbReference type="FunCoup" id="Q7UN14">
    <property type="interactions" value="667"/>
</dbReference>
<dbReference type="STRING" id="243090.RB7840"/>
<dbReference type="EnsemblBacteria" id="CAD75605">
    <property type="protein sequence ID" value="CAD75605"/>
    <property type="gene ID" value="RB7840"/>
</dbReference>
<dbReference type="GeneID" id="90608443"/>
<dbReference type="KEGG" id="rba:RB7840"/>
<dbReference type="PATRIC" id="fig|243090.15.peg.3788"/>
<dbReference type="eggNOG" id="COG0092">
    <property type="taxonomic scope" value="Bacteria"/>
</dbReference>
<dbReference type="HOGENOM" id="CLU_058591_0_2_0"/>
<dbReference type="InParanoid" id="Q7UN14"/>
<dbReference type="OrthoDB" id="9806396at2"/>
<dbReference type="Proteomes" id="UP000001025">
    <property type="component" value="Chromosome"/>
</dbReference>
<dbReference type="GO" id="GO:0022627">
    <property type="term" value="C:cytosolic small ribosomal subunit"/>
    <property type="evidence" value="ECO:0000318"/>
    <property type="project" value="GO_Central"/>
</dbReference>
<dbReference type="GO" id="GO:0003729">
    <property type="term" value="F:mRNA binding"/>
    <property type="evidence" value="ECO:0007669"/>
    <property type="project" value="UniProtKB-UniRule"/>
</dbReference>
<dbReference type="GO" id="GO:0019843">
    <property type="term" value="F:rRNA binding"/>
    <property type="evidence" value="ECO:0007669"/>
    <property type="project" value="UniProtKB-UniRule"/>
</dbReference>
<dbReference type="GO" id="GO:0003735">
    <property type="term" value="F:structural constituent of ribosome"/>
    <property type="evidence" value="ECO:0000318"/>
    <property type="project" value="GO_Central"/>
</dbReference>
<dbReference type="GO" id="GO:0006412">
    <property type="term" value="P:translation"/>
    <property type="evidence" value="ECO:0007669"/>
    <property type="project" value="UniProtKB-UniRule"/>
</dbReference>
<dbReference type="CDD" id="cd02412">
    <property type="entry name" value="KH-II_30S_S3"/>
    <property type="match status" value="1"/>
</dbReference>
<dbReference type="FunFam" id="3.30.300.20:FF:000001">
    <property type="entry name" value="30S ribosomal protein S3"/>
    <property type="match status" value="1"/>
</dbReference>
<dbReference type="Gene3D" id="3.30.300.20">
    <property type="match status" value="1"/>
</dbReference>
<dbReference type="Gene3D" id="3.30.1140.32">
    <property type="entry name" value="Ribosomal protein S3, C-terminal domain"/>
    <property type="match status" value="1"/>
</dbReference>
<dbReference type="HAMAP" id="MF_01309_B">
    <property type="entry name" value="Ribosomal_uS3_B"/>
    <property type="match status" value="1"/>
</dbReference>
<dbReference type="InterPro" id="IPR004087">
    <property type="entry name" value="KH_dom"/>
</dbReference>
<dbReference type="InterPro" id="IPR015946">
    <property type="entry name" value="KH_dom-like_a/b"/>
</dbReference>
<dbReference type="InterPro" id="IPR004044">
    <property type="entry name" value="KH_dom_type_2"/>
</dbReference>
<dbReference type="InterPro" id="IPR009019">
    <property type="entry name" value="KH_sf_prok-type"/>
</dbReference>
<dbReference type="InterPro" id="IPR036419">
    <property type="entry name" value="Ribosomal_S3_C_sf"/>
</dbReference>
<dbReference type="InterPro" id="IPR005704">
    <property type="entry name" value="Ribosomal_uS3_bac-typ"/>
</dbReference>
<dbReference type="InterPro" id="IPR001351">
    <property type="entry name" value="Ribosomal_uS3_C"/>
</dbReference>
<dbReference type="InterPro" id="IPR018280">
    <property type="entry name" value="Ribosomal_uS3_CS"/>
</dbReference>
<dbReference type="NCBIfam" id="TIGR01009">
    <property type="entry name" value="rpsC_bact"/>
    <property type="match status" value="1"/>
</dbReference>
<dbReference type="PANTHER" id="PTHR11760">
    <property type="entry name" value="30S/40S RIBOSOMAL PROTEIN S3"/>
    <property type="match status" value="1"/>
</dbReference>
<dbReference type="PANTHER" id="PTHR11760:SF19">
    <property type="entry name" value="SMALL RIBOSOMAL SUBUNIT PROTEIN US3C"/>
    <property type="match status" value="1"/>
</dbReference>
<dbReference type="Pfam" id="PF07650">
    <property type="entry name" value="KH_2"/>
    <property type="match status" value="1"/>
</dbReference>
<dbReference type="Pfam" id="PF00189">
    <property type="entry name" value="Ribosomal_S3_C"/>
    <property type="match status" value="1"/>
</dbReference>
<dbReference type="SMART" id="SM00322">
    <property type="entry name" value="KH"/>
    <property type="match status" value="1"/>
</dbReference>
<dbReference type="SUPFAM" id="SSF54814">
    <property type="entry name" value="Prokaryotic type KH domain (KH-domain type II)"/>
    <property type="match status" value="1"/>
</dbReference>
<dbReference type="SUPFAM" id="SSF54821">
    <property type="entry name" value="Ribosomal protein S3 C-terminal domain"/>
    <property type="match status" value="1"/>
</dbReference>
<dbReference type="PROSITE" id="PS50823">
    <property type="entry name" value="KH_TYPE_2"/>
    <property type="match status" value="1"/>
</dbReference>
<dbReference type="PROSITE" id="PS00548">
    <property type="entry name" value="RIBOSOMAL_S3"/>
    <property type="match status" value="1"/>
</dbReference>
<proteinExistence type="inferred from homology"/>
<comment type="function">
    <text evidence="1">Binds the lower part of the 30S subunit head. Binds mRNA in the 70S ribosome, positioning it for translation.</text>
</comment>
<comment type="subunit">
    <text evidence="1">Part of the 30S ribosomal subunit. Forms a tight complex with proteins S10 and S14.</text>
</comment>
<comment type="similarity">
    <text evidence="1">Belongs to the universal ribosomal protein uS3 family.</text>
</comment>
<reference key="1">
    <citation type="journal article" date="2003" name="Proc. Natl. Acad. Sci. U.S.A.">
        <title>Complete genome sequence of the marine planctomycete Pirellula sp. strain 1.</title>
        <authorList>
            <person name="Gloeckner F.O."/>
            <person name="Kube M."/>
            <person name="Bauer M."/>
            <person name="Teeling H."/>
            <person name="Lombardot T."/>
            <person name="Ludwig W."/>
            <person name="Gade D."/>
            <person name="Beck A."/>
            <person name="Borzym K."/>
            <person name="Heitmann K."/>
            <person name="Rabus R."/>
            <person name="Schlesner H."/>
            <person name="Amann R."/>
            <person name="Reinhardt R."/>
        </authorList>
    </citation>
    <scope>NUCLEOTIDE SEQUENCE [LARGE SCALE GENOMIC DNA]</scope>
    <source>
        <strain>DSM 10527 / NCIMB 13988 / SH1</strain>
    </source>
</reference>
<evidence type="ECO:0000255" key="1">
    <source>
        <dbReference type="HAMAP-Rule" id="MF_01309"/>
    </source>
</evidence>
<evidence type="ECO:0000256" key="2">
    <source>
        <dbReference type="SAM" id="MobiDB-lite"/>
    </source>
</evidence>
<evidence type="ECO:0000305" key="3"/>
<organism>
    <name type="scientific">Rhodopirellula baltica (strain DSM 10527 / NCIMB 13988 / SH1)</name>
    <dbReference type="NCBI Taxonomy" id="243090"/>
    <lineage>
        <taxon>Bacteria</taxon>
        <taxon>Pseudomonadati</taxon>
        <taxon>Planctomycetota</taxon>
        <taxon>Planctomycetia</taxon>
        <taxon>Pirellulales</taxon>
        <taxon>Pirellulaceae</taxon>
        <taxon>Rhodopirellula</taxon>
    </lineage>
</organism>
<accession>Q7UN14</accession>
<gene>
    <name evidence="1" type="primary">rpsC</name>
    <name type="ordered locus">RB7840</name>
</gene>
<protein>
    <recommendedName>
        <fullName evidence="1">Small ribosomal subunit protein uS3</fullName>
    </recommendedName>
    <alternativeName>
        <fullName evidence="3">30S ribosomal protein S3</fullName>
    </alternativeName>
</protein>
<feature type="chain" id="PRO_0000130184" description="Small ribosomal subunit protein uS3">
    <location>
        <begin position="1"/>
        <end position="236"/>
    </location>
</feature>
<feature type="domain" description="KH type-2" evidence="1">
    <location>
        <begin position="39"/>
        <end position="112"/>
    </location>
</feature>
<feature type="region of interest" description="Disordered" evidence="2">
    <location>
        <begin position="212"/>
        <end position="236"/>
    </location>
</feature>